<dbReference type="EC" id="1.5.1.38" evidence="6"/>
<dbReference type="EC" id="4.2.3.5" evidence="3"/>
<dbReference type="EMBL" id="AAKM01000003">
    <property type="protein sequence ID" value="EDL46514.1"/>
    <property type="molecule type" value="Genomic_DNA"/>
</dbReference>
<dbReference type="RefSeq" id="XP_001616241.1">
    <property type="nucleotide sequence ID" value="XM_001616191.1"/>
</dbReference>
<dbReference type="SMR" id="A5K264"/>
<dbReference type="FunCoup" id="A5K264">
    <property type="interactions" value="45"/>
</dbReference>
<dbReference type="STRING" id="126793.A5K264"/>
<dbReference type="EnsemblProtists" id="EDL46514">
    <property type="protein sequence ID" value="EDL46514"/>
    <property type="gene ID" value="PVX_114265"/>
</dbReference>
<dbReference type="GeneID" id="5475795"/>
<dbReference type="KEGG" id="pvx:PVX_114265"/>
<dbReference type="VEuPathDB" id="PlasmoDB:PVX_114265"/>
<dbReference type="InParanoid" id="A5K264"/>
<dbReference type="OMA" id="MLSINAV"/>
<dbReference type="PhylomeDB" id="A5K264"/>
<dbReference type="UniPathway" id="UPA00053">
    <property type="reaction ID" value="UER00090"/>
</dbReference>
<dbReference type="Proteomes" id="UP000008333">
    <property type="component" value="Chromosome 11"/>
</dbReference>
<dbReference type="GO" id="GO:0005829">
    <property type="term" value="C:cytosol"/>
    <property type="evidence" value="ECO:0007669"/>
    <property type="project" value="TreeGrafter"/>
</dbReference>
<dbReference type="GO" id="GO:0004107">
    <property type="term" value="F:chorismate synthase activity"/>
    <property type="evidence" value="ECO:0007669"/>
    <property type="project" value="InterPro"/>
</dbReference>
<dbReference type="GO" id="GO:0010181">
    <property type="term" value="F:FMN binding"/>
    <property type="evidence" value="ECO:0007669"/>
    <property type="project" value="TreeGrafter"/>
</dbReference>
<dbReference type="GO" id="GO:0008652">
    <property type="term" value="P:amino acid biosynthetic process"/>
    <property type="evidence" value="ECO:0007669"/>
    <property type="project" value="UniProtKB-KW"/>
</dbReference>
<dbReference type="GO" id="GO:0009073">
    <property type="term" value="P:aromatic amino acid family biosynthetic process"/>
    <property type="evidence" value="ECO:0007669"/>
    <property type="project" value="UniProtKB-KW"/>
</dbReference>
<dbReference type="GO" id="GO:0009423">
    <property type="term" value="P:chorismate biosynthetic process"/>
    <property type="evidence" value="ECO:0007669"/>
    <property type="project" value="TreeGrafter"/>
</dbReference>
<dbReference type="CDD" id="cd07304">
    <property type="entry name" value="Chorismate_synthase"/>
    <property type="match status" value="1"/>
</dbReference>
<dbReference type="Gene3D" id="3.60.150.10">
    <property type="entry name" value="Chorismate synthase AroC"/>
    <property type="match status" value="2"/>
</dbReference>
<dbReference type="HAMAP" id="MF_00300">
    <property type="entry name" value="Chorismate_synth"/>
    <property type="match status" value="1"/>
</dbReference>
<dbReference type="InterPro" id="IPR000453">
    <property type="entry name" value="Chorismate_synth"/>
</dbReference>
<dbReference type="InterPro" id="IPR035904">
    <property type="entry name" value="Chorismate_synth_AroC_sf"/>
</dbReference>
<dbReference type="PANTHER" id="PTHR21085">
    <property type="entry name" value="CHORISMATE SYNTHASE"/>
    <property type="match status" value="1"/>
</dbReference>
<dbReference type="PANTHER" id="PTHR21085:SF0">
    <property type="entry name" value="CHORISMATE SYNTHASE"/>
    <property type="match status" value="1"/>
</dbReference>
<dbReference type="Pfam" id="PF01264">
    <property type="entry name" value="Chorismate_synt"/>
    <property type="match status" value="2"/>
</dbReference>
<dbReference type="SUPFAM" id="SSF103263">
    <property type="entry name" value="Chorismate synthase, AroC"/>
    <property type="match status" value="1"/>
</dbReference>
<gene>
    <name evidence="5" type="primary">CS</name>
    <name evidence="7" type="ORF">PVX_114265</name>
</gene>
<sequence length="547" mass="59138">MSTYGTLLKVTSFGESHGKAIGCVIDGFLPNVEINFDLIQRQLNRRRPNQSKLTSNRNEPDKLIVLSGFDENKTLGTPITFLINNEDVIKKNYSSFIDIPRPGHGDYTYFKKYNVKNKSGSSRFSGRETATRVAAGACIEQWLHTFYNCTIVCYVHSVGNIKLPEQVSKDFERNPPSRDLVDAHGAVKYHQGRGTFTDFFGNVYNANGEFLRGGEAAPEGATPADGTPTDGNPTDDPLANARERLSDPGECTLLQTRCPHPLTAVKICSYILKLKKAGDSIGGVATCIAHNVPVGIGEPIFEKMEAELGKIILSIPAVKGIEFGSGFDGTYMLGSDHNDLFGTLDVPEEGPCQRGWTLTDALDSKRGEVTPGGSRAQEGTSFEKDACHRSGHLSNLSGYPSNGSGNPPNGSDHPSNRSGNPPNRSDPRVDESTRETSPPSGEKLLVTTSNNCGGILAGITTGNNIVFRSAIKPVSSIQIEKETCNFFGEKCKLKVTGMHDCCILPRLPPIIEASTSIVIGDMILRQVAKYGHSKLPSVGSLSRSTRE</sequence>
<name>AROC_PLAVS</name>
<reference evidence="8" key="1">
    <citation type="journal article" date="2008" name="Nature">
        <title>Comparative genomics of the neglected human malaria parasite Plasmodium vivax.</title>
        <authorList>
            <person name="Carlton J.M."/>
            <person name="Adams J.H."/>
            <person name="Silva J.C."/>
            <person name="Bidwell S.L."/>
            <person name="Lorenzi H."/>
            <person name="Caler E."/>
            <person name="Crabtree J."/>
            <person name="Angiuoli S.V."/>
            <person name="Merino E.F."/>
            <person name="Amedeo P."/>
            <person name="Cheng Q."/>
            <person name="Coulson R.M.R."/>
            <person name="Crabb B.S."/>
            <person name="del Portillo H.A."/>
            <person name="Essien K."/>
            <person name="Feldblyum T.V."/>
            <person name="Fernandez-Becerra C."/>
            <person name="Gilson P.R."/>
            <person name="Gueye A.H."/>
            <person name="Guo X."/>
            <person name="Kang'a S."/>
            <person name="Kooij T.W.A."/>
            <person name="Korsinczky M."/>
            <person name="Meyer E.V.-S."/>
            <person name="Nene V."/>
            <person name="Paulsen I."/>
            <person name="White O."/>
            <person name="Ralph S.A."/>
            <person name="Ren Q."/>
            <person name="Sargeant T.J."/>
            <person name="Salzberg S.L."/>
            <person name="Stoeckert C.J."/>
            <person name="Sullivan S.A."/>
            <person name="Yamamoto M.M."/>
            <person name="Hoffman S.L."/>
            <person name="Wortman J.R."/>
            <person name="Gardner M.J."/>
            <person name="Galinski M.R."/>
            <person name="Barnwell J.W."/>
            <person name="Fraser-Liggett C.M."/>
        </authorList>
    </citation>
    <scope>NUCLEOTIDE SEQUENCE [LARGE SCALE GENOMIC DNA]</scope>
    <source>
        <strain evidence="8">Salvador I</strain>
    </source>
</reference>
<reference evidence="5" key="2">
    <citation type="journal article" date="2019" name="Mol. Biochem. Parasitol.">
        <title>Chorismate synthase from malaria parasites is bifunctional enzyme.</title>
        <authorList>
            <person name="Khera H.K."/>
            <person name="Singh S.K."/>
            <person name="Singh S."/>
        </authorList>
    </citation>
    <scope>FUNCTION</scope>
    <scope>CATALYTIC ACTIVITY</scope>
</reference>
<feature type="chain" id="PRO_0000462310" description="Chorismate synthase">
    <location>
        <begin position="1"/>
        <end position="547"/>
    </location>
</feature>
<feature type="active site" evidence="2">
    <location>
        <position position="17"/>
    </location>
</feature>
<feature type="active site" evidence="2">
    <location>
        <position position="104"/>
    </location>
</feature>
<feature type="active site" evidence="2">
    <location>
        <position position="500"/>
    </location>
</feature>
<proteinExistence type="evidence at protein level"/>
<accession>A5K264</accession>
<comment type="function">
    <text evidence="3">Bifunctional chorismate synthase and flavin reductase (PubMed:31381947). Catalyzes the conversion of 5-enolpyruvylshikimate 3-phosphate (EPSP) to form chorismate (PubMed:31381947). Acts also as a flavin reductase (FR) able to generate reduced flavin mononucleotide in the presence of NADPH (PubMed:31381947).</text>
</comment>
<comment type="catalytic activity">
    <reaction evidence="3">
        <text>5-O-(1-carboxyvinyl)-3-phosphoshikimate = chorismate + phosphate</text>
        <dbReference type="Rhea" id="RHEA:21020"/>
        <dbReference type="ChEBI" id="CHEBI:29748"/>
        <dbReference type="ChEBI" id="CHEBI:43474"/>
        <dbReference type="ChEBI" id="CHEBI:57701"/>
        <dbReference type="EC" id="4.2.3.5"/>
    </reaction>
    <physiologicalReaction direction="left-to-right" evidence="5">
        <dbReference type="Rhea" id="RHEA:21021"/>
    </physiologicalReaction>
</comment>
<comment type="catalytic activity">
    <reaction evidence="6">
        <text>FMNH2 + NADP(+) = FMN + NADPH + 2 H(+)</text>
        <dbReference type="Rhea" id="RHEA:21624"/>
        <dbReference type="ChEBI" id="CHEBI:15378"/>
        <dbReference type="ChEBI" id="CHEBI:57618"/>
        <dbReference type="ChEBI" id="CHEBI:57783"/>
        <dbReference type="ChEBI" id="CHEBI:58210"/>
        <dbReference type="ChEBI" id="CHEBI:58349"/>
        <dbReference type="EC" id="1.5.1.38"/>
    </reaction>
    <physiologicalReaction direction="right-to-left" evidence="5">
        <dbReference type="Rhea" id="RHEA:21626"/>
    </physiologicalReaction>
</comment>
<comment type="pathway">
    <text evidence="2">Metabolic intermediate biosynthesis; chorismate biosynthesis; chorismate from D-erythrose 4-phosphate and phosphoenolpyruvate: step 7/7.</text>
</comment>
<comment type="subcellular location">
    <subcellularLocation>
        <location evidence="1">Cytoplasm</location>
        <location evidence="1">Cytosol</location>
    </subcellularLocation>
</comment>
<comment type="similarity">
    <text evidence="5">Belongs to the chorismate synthase family.</text>
</comment>
<organism evidence="8">
    <name type="scientific">Plasmodium vivax (strain Salvador I)</name>
    <dbReference type="NCBI Taxonomy" id="126793"/>
    <lineage>
        <taxon>Eukaryota</taxon>
        <taxon>Sar</taxon>
        <taxon>Alveolata</taxon>
        <taxon>Apicomplexa</taxon>
        <taxon>Aconoidasida</taxon>
        <taxon>Haemosporida</taxon>
        <taxon>Plasmodiidae</taxon>
        <taxon>Plasmodium</taxon>
        <taxon>Plasmodium (Plasmodium)</taxon>
    </lineage>
</organism>
<evidence type="ECO:0000250" key="1">
    <source>
        <dbReference type="UniProtKB" id="C6KT66"/>
    </source>
</evidence>
<evidence type="ECO:0000250" key="2">
    <source>
        <dbReference type="UniProtKB" id="Q12640"/>
    </source>
</evidence>
<evidence type="ECO:0000269" key="3">
    <source>
    </source>
</evidence>
<evidence type="ECO:0000303" key="4">
    <source>
    </source>
</evidence>
<evidence type="ECO:0000305" key="5"/>
<evidence type="ECO:0000305" key="6">
    <source>
    </source>
</evidence>
<evidence type="ECO:0000312" key="7">
    <source>
        <dbReference type="EMBL" id="EDL46514.1"/>
    </source>
</evidence>
<evidence type="ECO:0000312" key="8">
    <source>
        <dbReference type="Proteomes" id="UP000008333"/>
    </source>
</evidence>
<keyword id="KW-0028">Amino-acid biosynthesis</keyword>
<keyword id="KW-0057">Aromatic amino acid biosynthesis</keyword>
<keyword id="KW-0963">Cytoplasm</keyword>
<keyword id="KW-0456">Lyase</keyword>
<keyword id="KW-0560">Oxidoreductase</keyword>
<keyword id="KW-1185">Reference proteome</keyword>
<protein>
    <recommendedName>
        <fullName evidence="4">Chorismate synthase</fullName>
        <ecNumber evidence="6">1.5.1.38</ecNumber>
        <ecNumber evidence="3">4.2.3.5</ecNumber>
    </recommendedName>
</protein>